<protein>
    <recommendedName>
        <fullName>Probable uridylyltransferase SSP0716</fullName>
        <ecNumber>2.7.7.-</ecNumber>
    </recommendedName>
</protein>
<reference key="1">
    <citation type="journal article" date="2005" name="Proc. Natl. Acad. Sci. U.S.A.">
        <title>Whole genome sequence of Staphylococcus saprophyticus reveals the pathogenesis of uncomplicated urinary tract infection.</title>
        <authorList>
            <person name="Kuroda M."/>
            <person name="Yamashita A."/>
            <person name="Hirakawa H."/>
            <person name="Kumano M."/>
            <person name="Morikawa K."/>
            <person name="Higashide M."/>
            <person name="Maruyama A."/>
            <person name="Inose Y."/>
            <person name="Matoba K."/>
            <person name="Toh H."/>
            <person name="Kuhara S."/>
            <person name="Hattori M."/>
            <person name="Ohta T."/>
        </authorList>
    </citation>
    <scope>NUCLEOTIDE SEQUENCE [LARGE SCALE GENOMIC DNA]</scope>
    <source>
        <strain>ATCC 15305 / DSM 20229 / NCIMB 8711 / NCTC 7292 / S-41</strain>
    </source>
</reference>
<feature type="chain" id="PRO_0000271318" description="Probable uridylyltransferase SSP0716">
    <location>
        <begin position="1"/>
        <end position="395"/>
    </location>
</feature>
<feature type="binding site" evidence="1">
    <location>
        <begin position="99"/>
        <end position="102"/>
    </location>
    <ligand>
        <name>UTP</name>
        <dbReference type="ChEBI" id="CHEBI:46398"/>
    </ligand>
</feature>
<feature type="binding site" evidence="1">
    <location>
        <position position="113"/>
    </location>
    <ligand>
        <name>UTP</name>
        <dbReference type="ChEBI" id="CHEBI:46398"/>
    </ligand>
</feature>
<feature type="binding site" evidence="1">
    <location>
        <position position="178"/>
    </location>
    <ligand>
        <name>UTP</name>
        <dbReference type="ChEBI" id="CHEBI:46398"/>
    </ligand>
</feature>
<feature type="binding site" evidence="1">
    <location>
        <position position="204"/>
    </location>
    <ligand>
        <name>UTP</name>
        <dbReference type="ChEBI" id="CHEBI:46398"/>
    </ligand>
</feature>
<feature type="binding site" evidence="1">
    <location>
        <position position="235"/>
    </location>
    <ligand>
        <name>UTP</name>
        <dbReference type="ChEBI" id="CHEBI:46398"/>
    </ligand>
</feature>
<feature type="binding site" evidence="1">
    <location>
        <position position="344"/>
    </location>
    <ligand>
        <name>UTP</name>
        <dbReference type="ChEBI" id="CHEBI:46398"/>
    </ligand>
</feature>
<accession>Q49ZB5</accession>
<keyword id="KW-0548">Nucleotidyltransferase</keyword>
<keyword id="KW-1185">Reference proteome</keyword>
<keyword id="KW-0808">Transferase</keyword>
<name>URTF_STAS1</name>
<proteinExistence type="inferred from homology"/>
<evidence type="ECO:0000250" key="1">
    <source>
        <dbReference type="UniProtKB" id="Q9M9P3"/>
    </source>
</evidence>
<evidence type="ECO:0000305" key="2"/>
<gene>
    <name type="ordered locus">SSP0716</name>
</gene>
<dbReference type="EC" id="2.7.7.-"/>
<dbReference type="EMBL" id="AP008934">
    <property type="protein sequence ID" value="BAE17861.1"/>
    <property type="molecule type" value="Genomic_DNA"/>
</dbReference>
<dbReference type="RefSeq" id="WP_011302630.1">
    <property type="nucleotide sequence ID" value="NZ_MTGA01000036.1"/>
</dbReference>
<dbReference type="SMR" id="Q49ZB5"/>
<dbReference type="GeneID" id="3615917"/>
<dbReference type="KEGG" id="ssp:SSP0716"/>
<dbReference type="PATRIC" id="fig|342451.11.peg.718"/>
<dbReference type="eggNOG" id="COG4284">
    <property type="taxonomic scope" value="Bacteria"/>
</dbReference>
<dbReference type="HOGENOM" id="CLU_025603_1_2_9"/>
<dbReference type="OrthoDB" id="9806910at2"/>
<dbReference type="Proteomes" id="UP000006371">
    <property type="component" value="Chromosome"/>
</dbReference>
<dbReference type="GO" id="GO:0070569">
    <property type="term" value="F:uridylyltransferase activity"/>
    <property type="evidence" value="ECO:0007669"/>
    <property type="project" value="InterPro"/>
</dbReference>
<dbReference type="CDD" id="cd04193">
    <property type="entry name" value="UDPGlcNAc_PPase"/>
    <property type="match status" value="1"/>
</dbReference>
<dbReference type="Gene3D" id="3.90.550.10">
    <property type="entry name" value="Spore Coat Polysaccharide Biosynthesis Protein SpsA, Chain A"/>
    <property type="match status" value="1"/>
</dbReference>
<dbReference type="InterPro" id="IPR029044">
    <property type="entry name" value="Nucleotide-diphossugar_trans"/>
</dbReference>
<dbReference type="InterPro" id="IPR039741">
    <property type="entry name" value="UDP-sugar_pyrophosphorylase"/>
</dbReference>
<dbReference type="InterPro" id="IPR002618">
    <property type="entry name" value="UDPGP_fam"/>
</dbReference>
<dbReference type="PANTHER" id="PTHR11952:SF2">
    <property type="entry name" value="LD24639P"/>
    <property type="match status" value="1"/>
</dbReference>
<dbReference type="PANTHER" id="PTHR11952">
    <property type="entry name" value="UDP- GLUCOSE PYROPHOSPHORYLASE"/>
    <property type="match status" value="1"/>
</dbReference>
<dbReference type="Pfam" id="PF01704">
    <property type="entry name" value="UDPGP"/>
    <property type="match status" value="1"/>
</dbReference>
<dbReference type="SUPFAM" id="SSF53448">
    <property type="entry name" value="Nucleotide-diphospho-sugar transferases"/>
    <property type="match status" value="1"/>
</dbReference>
<sequence length="395" mass="45266">MLDKKTLEKFNQEHLIEFEKLMSSNEKEHLSEKLESLNLADIRNLYNDLYLNKKVIDDVSSVNEVKYDVKSEFTVDEIEQYEKIGLDAIKKGKFAVLLMAGGQGTRLGYKGPKGSFEIEDTSLFEIQAKQLLALKEQTGQYIDWYIMTSKINDKETQLYFESKNYFGYDRDHVHFFMQDNIVALSEEGKLVLDVDSNILETPNGNGGVFKSLAKSGYLDEMTENGVEYIFLNNIDNVLVKVLDPLFAGYTFQKSMDITTKSIQPKDGESVGRLVNANQKDTVLEYSELDPEIANEFNNANIGIHSFKLAFINNVVDNDLPYHLAIKNLKQLDEDFGVIELPTLKFELFYFDIFQYAHSFVTLQVPREEEFSPLKNKEGKDSVETATADLKRMNMI</sequence>
<comment type="similarity">
    <text evidence="2">Belongs to the UDPGP type 1 family.</text>
</comment>
<organism>
    <name type="scientific">Staphylococcus saprophyticus subsp. saprophyticus (strain ATCC 15305 / DSM 20229 / NCIMB 8711 / NCTC 7292 / S-41)</name>
    <dbReference type="NCBI Taxonomy" id="342451"/>
    <lineage>
        <taxon>Bacteria</taxon>
        <taxon>Bacillati</taxon>
        <taxon>Bacillota</taxon>
        <taxon>Bacilli</taxon>
        <taxon>Bacillales</taxon>
        <taxon>Staphylococcaceae</taxon>
        <taxon>Staphylococcus</taxon>
    </lineage>
</organism>